<keyword id="KW-0687">Ribonucleoprotein</keyword>
<keyword id="KW-0689">Ribosomal protein</keyword>
<keyword id="KW-0694">RNA-binding</keyword>
<keyword id="KW-0699">rRNA-binding</keyword>
<name>RL25_ECOHS</name>
<proteinExistence type="inferred from homology"/>
<organism>
    <name type="scientific">Escherichia coli O9:H4 (strain HS)</name>
    <dbReference type="NCBI Taxonomy" id="331112"/>
    <lineage>
        <taxon>Bacteria</taxon>
        <taxon>Pseudomonadati</taxon>
        <taxon>Pseudomonadota</taxon>
        <taxon>Gammaproteobacteria</taxon>
        <taxon>Enterobacterales</taxon>
        <taxon>Enterobacteriaceae</taxon>
        <taxon>Escherichia</taxon>
    </lineage>
</organism>
<reference key="1">
    <citation type="journal article" date="2008" name="J. Bacteriol.">
        <title>The pangenome structure of Escherichia coli: comparative genomic analysis of E. coli commensal and pathogenic isolates.</title>
        <authorList>
            <person name="Rasko D.A."/>
            <person name="Rosovitz M.J."/>
            <person name="Myers G.S.A."/>
            <person name="Mongodin E.F."/>
            <person name="Fricke W.F."/>
            <person name="Gajer P."/>
            <person name="Crabtree J."/>
            <person name="Sebaihia M."/>
            <person name="Thomson N.R."/>
            <person name="Chaudhuri R."/>
            <person name="Henderson I.R."/>
            <person name="Sperandio V."/>
            <person name="Ravel J."/>
        </authorList>
    </citation>
    <scope>NUCLEOTIDE SEQUENCE [LARGE SCALE GENOMIC DNA]</scope>
    <source>
        <strain>HS</strain>
    </source>
</reference>
<evidence type="ECO:0000255" key="1">
    <source>
        <dbReference type="HAMAP-Rule" id="MF_01336"/>
    </source>
</evidence>
<evidence type="ECO:0000305" key="2"/>
<gene>
    <name evidence="1" type="primary">rplY</name>
    <name type="ordered locus">EcHS_A2323</name>
</gene>
<comment type="function">
    <text evidence="1">This is one of the proteins that binds to the 5S RNA in the ribosome where it forms part of the central protuberance.</text>
</comment>
<comment type="subunit">
    <text evidence="1">Part of the 50S ribosomal subunit; part of the 5S rRNA/L5/L18/L25 subcomplex. Contacts the 5S rRNA. Binds to the 5S rRNA independently of L5 and L18.</text>
</comment>
<comment type="similarity">
    <text evidence="1">Belongs to the bacterial ribosomal protein bL25 family.</text>
</comment>
<accession>A8A248</accession>
<dbReference type="EMBL" id="CP000802">
    <property type="protein sequence ID" value="ABV06602.1"/>
    <property type="molecule type" value="Genomic_DNA"/>
</dbReference>
<dbReference type="RefSeq" id="WP_000494183.1">
    <property type="nucleotide sequence ID" value="NC_009800.1"/>
</dbReference>
<dbReference type="BMRB" id="A8A248"/>
<dbReference type="SMR" id="A8A248"/>
<dbReference type="GeneID" id="93774996"/>
<dbReference type="KEGG" id="ecx:EcHS_A2323"/>
<dbReference type="HOGENOM" id="CLU_137946_0_0_6"/>
<dbReference type="GO" id="GO:0022625">
    <property type="term" value="C:cytosolic large ribosomal subunit"/>
    <property type="evidence" value="ECO:0007669"/>
    <property type="project" value="TreeGrafter"/>
</dbReference>
<dbReference type="GO" id="GO:0008097">
    <property type="term" value="F:5S rRNA binding"/>
    <property type="evidence" value="ECO:0007669"/>
    <property type="project" value="InterPro"/>
</dbReference>
<dbReference type="GO" id="GO:0003735">
    <property type="term" value="F:structural constituent of ribosome"/>
    <property type="evidence" value="ECO:0007669"/>
    <property type="project" value="InterPro"/>
</dbReference>
<dbReference type="GO" id="GO:0006412">
    <property type="term" value="P:translation"/>
    <property type="evidence" value="ECO:0007669"/>
    <property type="project" value="UniProtKB-UniRule"/>
</dbReference>
<dbReference type="CDD" id="cd00495">
    <property type="entry name" value="Ribosomal_L25_TL5_CTC"/>
    <property type="match status" value="1"/>
</dbReference>
<dbReference type="FunFam" id="2.40.240.10:FF:000002">
    <property type="entry name" value="50S ribosomal protein L25"/>
    <property type="match status" value="1"/>
</dbReference>
<dbReference type="Gene3D" id="2.40.240.10">
    <property type="entry name" value="Ribosomal Protein L25, Chain P"/>
    <property type="match status" value="1"/>
</dbReference>
<dbReference type="HAMAP" id="MF_01336">
    <property type="entry name" value="Ribosomal_bL25"/>
    <property type="match status" value="1"/>
</dbReference>
<dbReference type="InterPro" id="IPR020056">
    <property type="entry name" value="Rbsml_bL25/Gln-tRNA_synth_N"/>
</dbReference>
<dbReference type="InterPro" id="IPR011035">
    <property type="entry name" value="Ribosomal_bL25/Gln-tRNA_synth"/>
</dbReference>
<dbReference type="InterPro" id="IPR020055">
    <property type="entry name" value="Ribosomal_bL25_short"/>
</dbReference>
<dbReference type="InterPro" id="IPR029751">
    <property type="entry name" value="Ribosomal_L25_dom"/>
</dbReference>
<dbReference type="InterPro" id="IPR020930">
    <property type="entry name" value="Ribosomal_uL5_bac-type"/>
</dbReference>
<dbReference type="NCBIfam" id="NF004612">
    <property type="entry name" value="PRK05943.1"/>
    <property type="match status" value="1"/>
</dbReference>
<dbReference type="PANTHER" id="PTHR33284">
    <property type="entry name" value="RIBOSOMAL PROTEIN L25/GLN-TRNA SYNTHETASE, ANTI-CODON-BINDING DOMAIN-CONTAINING PROTEIN"/>
    <property type="match status" value="1"/>
</dbReference>
<dbReference type="PANTHER" id="PTHR33284:SF1">
    <property type="entry name" value="RIBOSOMAL PROTEIN L25_GLN-TRNA SYNTHETASE, ANTI-CODON-BINDING DOMAIN-CONTAINING PROTEIN"/>
    <property type="match status" value="1"/>
</dbReference>
<dbReference type="Pfam" id="PF01386">
    <property type="entry name" value="Ribosomal_L25p"/>
    <property type="match status" value="1"/>
</dbReference>
<dbReference type="SUPFAM" id="SSF50715">
    <property type="entry name" value="Ribosomal protein L25-like"/>
    <property type="match status" value="1"/>
</dbReference>
<protein>
    <recommendedName>
        <fullName evidence="1">Large ribosomal subunit protein bL25</fullName>
    </recommendedName>
    <alternativeName>
        <fullName evidence="2">50S ribosomal protein L25</fullName>
    </alternativeName>
</protein>
<sequence>MFTINAEVRKEQGKGASRRLRAANKFPAIIYGGKEAPLAIELDHDKVMNMQAKAEFYSEVLTIVVDGKEIKVKAQDVQRHPYKPKLQHIDFVRA</sequence>
<feature type="chain" id="PRO_1000067631" description="Large ribosomal subunit protein bL25">
    <location>
        <begin position="1"/>
        <end position="94"/>
    </location>
</feature>